<protein>
    <recommendedName>
        <fullName evidence="1">UDP-N-acetylglucosamine 1-carboxyvinyltransferase</fullName>
        <ecNumber evidence="1">2.5.1.7</ecNumber>
    </recommendedName>
    <alternativeName>
        <fullName evidence="1">Enoylpyruvate transferase</fullName>
    </alternativeName>
    <alternativeName>
        <fullName evidence="1">UDP-N-acetylglucosamine enolpyruvyl transferase</fullName>
        <shortName evidence="1">EPT</shortName>
    </alternativeName>
</protein>
<reference key="1">
    <citation type="journal article" date="2007" name="J. Bacteriol.">
        <title>The genome sequence of avian pathogenic Escherichia coli strain O1:K1:H7 shares strong similarities with human extraintestinal pathogenic E. coli genomes.</title>
        <authorList>
            <person name="Johnson T.J."/>
            <person name="Kariyawasam S."/>
            <person name="Wannemuehler Y."/>
            <person name="Mangiamele P."/>
            <person name="Johnson S.J."/>
            <person name="Doetkott C."/>
            <person name="Skyberg J.A."/>
            <person name="Lynne A.M."/>
            <person name="Johnson J.R."/>
            <person name="Nolan L.K."/>
        </authorList>
    </citation>
    <scope>NUCLEOTIDE SEQUENCE [LARGE SCALE GENOMIC DNA]</scope>
</reference>
<proteinExistence type="inferred from homology"/>
<organism>
    <name type="scientific">Escherichia coli O1:K1 / APEC</name>
    <dbReference type="NCBI Taxonomy" id="405955"/>
    <lineage>
        <taxon>Bacteria</taxon>
        <taxon>Pseudomonadati</taxon>
        <taxon>Pseudomonadota</taxon>
        <taxon>Gammaproteobacteria</taxon>
        <taxon>Enterobacterales</taxon>
        <taxon>Enterobacteriaceae</taxon>
        <taxon>Escherichia</taxon>
    </lineage>
</organism>
<dbReference type="EC" id="2.5.1.7" evidence="1"/>
<dbReference type="EMBL" id="CP000468">
    <property type="protein sequence ID" value="ABJ02681.1"/>
    <property type="molecule type" value="Genomic_DNA"/>
</dbReference>
<dbReference type="RefSeq" id="WP_000357259.1">
    <property type="nucleotide sequence ID" value="NZ_CADILS010000003.1"/>
</dbReference>
<dbReference type="SMR" id="A1AG91"/>
<dbReference type="GeneID" id="93778792"/>
<dbReference type="KEGG" id="ecv:APECO1_3245"/>
<dbReference type="HOGENOM" id="CLU_027387_0_0_6"/>
<dbReference type="UniPathway" id="UPA00219"/>
<dbReference type="Proteomes" id="UP000008216">
    <property type="component" value="Chromosome"/>
</dbReference>
<dbReference type="GO" id="GO:0005737">
    <property type="term" value="C:cytoplasm"/>
    <property type="evidence" value="ECO:0007669"/>
    <property type="project" value="UniProtKB-SubCell"/>
</dbReference>
<dbReference type="GO" id="GO:0008760">
    <property type="term" value="F:UDP-N-acetylglucosamine 1-carboxyvinyltransferase activity"/>
    <property type="evidence" value="ECO:0007669"/>
    <property type="project" value="UniProtKB-UniRule"/>
</dbReference>
<dbReference type="GO" id="GO:0051301">
    <property type="term" value="P:cell division"/>
    <property type="evidence" value="ECO:0007669"/>
    <property type="project" value="UniProtKB-KW"/>
</dbReference>
<dbReference type="GO" id="GO:0071555">
    <property type="term" value="P:cell wall organization"/>
    <property type="evidence" value="ECO:0007669"/>
    <property type="project" value="UniProtKB-KW"/>
</dbReference>
<dbReference type="GO" id="GO:0009252">
    <property type="term" value="P:peptidoglycan biosynthetic process"/>
    <property type="evidence" value="ECO:0007669"/>
    <property type="project" value="UniProtKB-UniRule"/>
</dbReference>
<dbReference type="GO" id="GO:0008360">
    <property type="term" value="P:regulation of cell shape"/>
    <property type="evidence" value="ECO:0007669"/>
    <property type="project" value="UniProtKB-KW"/>
</dbReference>
<dbReference type="GO" id="GO:0019277">
    <property type="term" value="P:UDP-N-acetylgalactosamine biosynthetic process"/>
    <property type="evidence" value="ECO:0007669"/>
    <property type="project" value="InterPro"/>
</dbReference>
<dbReference type="CDD" id="cd01555">
    <property type="entry name" value="UdpNAET"/>
    <property type="match status" value="1"/>
</dbReference>
<dbReference type="FunFam" id="3.65.10.10:FF:000002">
    <property type="entry name" value="UDP-N-acetylglucosamine 1-carboxyvinyltransferase"/>
    <property type="match status" value="1"/>
</dbReference>
<dbReference type="Gene3D" id="3.65.10.10">
    <property type="entry name" value="Enolpyruvate transferase domain"/>
    <property type="match status" value="2"/>
</dbReference>
<dbReference type="HAMAP" id="MF_00111">
    <property type="entry name" value="MurA"/>
    <property type="match status" value="1"/>
</dbReference>
<dbReference type="InterPro" id="IPR001986">
    <property type="entry name" value="Enolpyruvate_Tfrase_dom"/>
</dbReference>
<dbReference type="InterPro" id="IPR036968">
    <property type="entry name" value="Enolpyruvate_Tfrase_sf"/>
</dbReference>
<dbReference type="InterPro" id="IPR050068">
    <property type="entry name" value="MurA_subfamily"/>
</dbReference>
<dbReference type="InterPro" id="IPR013792">
    <property type="entry name" value="RNA3'P_cycl/enolpyr_Trfase_a/b"/>
</dbReference>
<dbReference type="InterPro" id="IPR005750">
    <property type="entry name" value="UDP_GlcNAc_COvinyl_MurA"/>
</dbReference>
<dbReference type="NCBIfam" id="TIGR01072">
    <property type="entry name" value="murA"/>
    <property type="match status" value="1"/>
</dbReference>
<dbReference type="NCBIfam" id="NF006873">
    <property type="entry name" value="PRK09369.1"/>
    <property type="match status" value="1"/>
</dbReference>
<dbReference type="PANTHER" id="PTHR43783">
    <property type="entry name" value="UDP-N-ACETYLGLUCOSAMINE 1-CARBOXYVINYLTRANSFERASE"/>
    <property type="match status" value="1"/>
</dbReference>
<dbReference type="PANTHER" id="PTHR43783:SF1">
    <property type="entry name" value="UDP-N-ACETYLGLUCOSAMINE 1-CARBOXYVINYLTRANSFERASE"/>
    <property type="match status" value="1"/>
</dbReference>
<dbReference type="Pfam" id="PF00275">
    <property type="entry name" value="EPSP_synthase"/>
    <property type="match status" value="1"/>
</dbReference>
<dbReference type="SUPFAM" id="SSF55205">
    <property type="entry name" value="EPT/RTPC-like"/>
    <property type="match status" value="1"/>
</dbReference>
<accession>A1AG91</accession>
<evidence type="ECO:0000255" key="1">
    <source>
        <dbReference type="HAMAP-Rule" id="MF_00111"/>
    </source>
</evidence>
<keyword id="KW-0131">Cell cycle</keyword>
<keyword id="KW-0132">Cell division</keyword>
<keyword id="KW-0133">Cell shape</keyword>
<keyword id="KW-0961">Cell wall biogenesis/degradation</keyword>
<keyword id="KW-0963">Cytoplasm</keyword>
<keyword id="KW-0573">Peptidoglycan synthesis</keyword>
<keyword id="KW-0670">Pyruvate</keyword>
<keyword id="KW-1185">Reference proteome</keyword>
<keyword id="KW-0808">Transferase</keyword>
<comment type="function">
    <text evidence="1">Cell wall formation. Adds enolpyruvyl to UDP-N-acetylglucosamine.</text>
</comment>
<comment type="catalytic activity">
    <reaction evidence="1">
        <text>phosphoenolpyruvate + UDP-N-acetyl-alpha-D-glucosamine = UDP-N-acetyl-3-O-(1-carboxyvinyl)-alpha-D-glucosamine + phosphate</text>
        <dbReference type="Rhea" id="RHEA:18681"/>
        <dbReference type="ChEBI" id="CHEBI:43474"/>
        <dbReference type="ChEBI" id="CHEBI:57705"/>
        <dbReference type="ChEBI" id="CHEBI:58702"/>
        <dbReference type="ChEBI" id="CHEBI:68483"/>
        <dbReference type="EC" id="2.5.1.7"/>
    </reaction>
</comment>
<comment type="pathway">
    <text evidence="1">Cell wall biogenesis; peptidoglycan biosynthesis.</text>
</comment>
<comment type="subcellular location">
    <subcellularLocation>
        <location evidence="1">Cytoplasm</location>
    </subcellularLocation>
</comment>
<comment type="similarity">
    <text evidence="1">Belongs to the EPSP synthase family. MurA subfamily.</text>
</comment>
<gene>
    <name evidence="1" type="primary">murA</name>
    <name type="ordered locus">Ecok1_31870</name>
    <name type="ORF">APECO1_3245</name>
</gene>
<name>MURA_ECOK1</name>
<sequence>MDKFRVQGPTKLQGEVTISGAKNAALPILFAALLAEEPVEIQNVPKLKDVDTSMKLLSQLGAKVERNGSVHIDARDVNVFCAPYDLVKTMRASIWALGPLVARFGQGQVSLPGGCTIGARPVDLHISGLEQLGATIKLEEGYVKASVDGRLKGAHIVMDKVSVGATVTIMCAATLAEGTTIIENAAREPEIVDTANFLITLGAKISGQGTDRIVIEGVERLGGGVYRVLPDRIETGTFLVAAAISRGKIICRNAQPDTLDAVLAKLRDAGADIEVGEDWISLDMHGKRPKAVNVRTAPHPAFPTDMQAQFTLLNLVAEGTGFITETVFENRFMHVPELSRMGAHAEIESNTVICHGVEKLSGAQVMATDLRASASLVLAGCIAEGTTVVDRIYHIDRGYERIEDKLRALGANIERVKGE</sequence>
<feature type="chain" id="PRO_1000023033" description="UDP-N-acetylglucosamine 1-carboxyvinyltransferase">
    <location>
        <begin position="1"/>
        <end position="419"/>
    </location>
</feature>
<feature type="active site" description="Proton donor" evidence="1">
    <location>
        <position position="115"/>
    </location>
</feature>
<feature type="binding site" evidence="1">
    <location>
        <begin position="22"/>
        <end position="23"/>
    </location>
    <ligand>
        <name>phosphoenolpyruvate</name>
        <dbReference type="ChEBI" id="CHEBI:58702"/>
    </ligand>
</feature>
<feature type="binding site" evidence="1">
    <location>
        <position position="91"/>
    </location>
    <ligand>
        <name>UDP-N-acetyl-alpha-D-glucosamine</name>
        <dbReference type="ChEBI" id="CHEBI:57705"/>
    </ligand>
</feature>
<feature type="binding site" evidence="1">
    <location>
        <begin position="120"/>
        <end position="124"/>
    </location>
    <ligand>
        <name>UDP-N-acetyl-alpha-D-glucosamine</name>
        <dbReference type="ChEBI" id="CHEBI:57705"/>
    </ligand>
</feature>
<feature type="binding site" evidence="1">
    <location>
        <begin position="160"/>
        <end position="163"/>
    </location>
    <ligand>
        <name>UDP-N-acetyl-alpha-D-glucosamine</name>
        <dbReference type="ChEBI" id="CHEBI:57705"/>
    </ligand>
</feature>
<feature type="binding site" evidence="1">
    <location>
        <position position="305"/>
    </location>
    <ligand>
        <name>UDP-N-acetyl-alpha-D-glucosamine</name>
        <dbReference type="ChEBI" id="CHEBI:57705"/>
    </ligand>
</feature>
<feature type="binding site" evidence="1">
    <location>
        <position position="327"/>
    </location>
    <ligand>
        <name>UDP-N-acetyl-alpha-D-glucosamine</name>
        <dbReference type="ChEBI" id="CHEBI:57705"/>
    </ligand>
</feature>
<feature type="modified residue" description="2-(S-cysteinyl)pyruvic acid O-phosphothioketal" evidence="1">
    <location>
        <position position="115"/>
    </location>
</feature>